<proteinExistence type="inferred from homology"/>
<feature type="chain" id="PRO_0000391705" description="Ubiquinol-cytochrome-c reductase complex assembly factor 3">
    <location>
        <begin position="1"/>
        <end position="89"/>
    </location>
</feature>
<feature type="topological domain" description="Mitochondrial matrix" evidence="1">
    <location>
        <begin position="1"/>
        <end position="7"/>
    </location>
</feature>
<feature type="transmembrane region" description="Helical" evidence="3">
    <location>
        <begin position="8"/>
        <end position="28"/>
    </location>
</feature>
<feature type="topological domain" description="Mitochondrial intermembrane" evidence="1">
    <location>
        <begin position="29"/>
        <end position="89"/>
    </location>
</feature>
<feature type="region of interest" description="Mediates lipid-binding" evidence="1">
    <location>
        <begin position="23"/>
        <end position="80"/>
    </location>
</feature>
<organism>
    <name type="scientific">Rattus norvegicus</name>
    <name type="common">Rat</name>
    <dbReference type="NCBI Taxonomy" id="10116"/>
    <lineage>
        <taxon>Eukaryota</taxon>
        <taxon>Metazoa</taxon>
        <taxon>Chordata</taxon>
        <taxon>Craniata</taxon>
        <taxon>Vertebrata</taxon>
        <taxon>Euteleostomi</taxon>
        <taxon>Mammalia</taxon>
        <taxon>Eutheria</taxon>
        <taxon>Euarchontoglires</taxon>
        <taxon>Glires</taxon>
        <taxon>Rodentia</taxon>
        <taxon>Myomorpha</taxon>
        <taxon>Muroidea</taxon>
        <taxon>Muridae</taxon>
        <taxon>Murinae</taxon>
        <taxon>Rattus</taxon>
    </lineage>
</organism>
<gene>
    <name evidence="1" type="primary">Uqcc3</name>
</gene>
<name>UQCC3_RAT</name>
<reference key="1">
    <citation type="submission" date="2008-04" db="EMBL/GenBank/DDBJ databases">
        <authorList>
            <person name="Kube M."/>
            <person name="Klages S."/>
            <person name="Kuhl H."/>
            <person name="Thiel J."/>
            <person name="Beck A."/>
            <person name="Reinhardt R."/>
        </authorList>
    </citation>
    <scope>NUCLEOTIDE SEQUENCE [LARGE SCALE MRNA]</scope>
    <source>
        <strain>Brown Norway/NHsdMcwi</strain>
        <tissue>Heart</tissue>
    </source>
</reference>
<reference key="2">
    <citation type="journal article" date="2004" name="Nature">
        <title>Genome sequence of the Brown Norway rat yields insights into mammalian evolution.</title>
        <authorList>
            <person name="Gibbs R.A."/>
            <person name="Weinstock G.M."/>
            <person name="Metzker M.L."/>
            <person name="Muzny D.M."/>
            <person name="Sodergren E.J."/>
            <person name="Scherer S."/>
            <person name="Scott G."/>
            <person name="Steffen D."/>
            <person name="Worley K.C."/>
            <person name="Burch P.E."/>
            <person name="Okwuonu G."/>
            <person name="Hines S."/>
            <person name="Lewis L."/>
            <person name="Deramo C."/>
            <person name="Delgado O."/>
            <person name="Dugan-Rocha S."/>
            <person name="Miner G."/>
            <person name="Morgan M."/>
            <person name="Hawes A."/>
            <person name="Gill R."/>
            <person name="Holt R.A."/>
            <person name="Adams M.D."/>
            <person name="Amanatides P.G."/>
            <person name="Baden-Tillson H."/>
            <person name="Barnstead M."/>
            <person name="Chin S."/>
            <person name="Evans C.A."/>
            <person name="Ferriera S."/>
            <person name="Fosler C."/>
            <person name="Glodek A."/>
            <person name="Gu Z."/>
            <person name="Jennings D."/>
            <person name="Kraft C.L."/>
            <person name="Nguyen T."/>
            <person name="Pfannkoch C.M."/>
            <person name="Sitter C."/>
            <person name="Sutton G.G."/>
            <person name="Venter J.C."/>
            <person name="Woodage T."/>
            <person name="Smith D."/>
            <person name="Lee H.-M."/>
            <person name="Gustafson E."/>
            <person name="Cahill P."/>
            <person name="Kana A."/>
            <person name="Doucette-Stamm L."/>
            <person name="Weinstock K."/>
            <person name="Fechtel K."/>
            <person name="Weiss R.B."/>
            <person name="Dunn D.M."/>
            <person name="Green E.D."/>
            <person name="Blakesley R.W."/>
            <person name="Bouffard G.G."/>
            <person name="De Jong P.J."/>
            <person name="Osoegawa K."/>
            <person name="Zhu B."/>
            <person name="Marra M."/>
            <person name="Schein J."/>
            <person name="Bosdet I."/>
            <person name="Fjell C."/>
            <person name="Jones S."/>
            <person name="Krzywinski M."/>
            <person name="Mathewson C."/>
            <person name="Siddiqui A."/>
            <person name="Wye N."/>
            <person name="McPherson J."/>
            <person name="Zhao S."/>
            <person name="Fraser C.M."/>
            <person name="Shetty J."/>
            <person name="Shatsman S."/>
            <person name="Geer K."/>
            <person name="Chen Y."/>
            <person name="Abramzon S."/>
            <person name="Nierman W.C."/>
            <person name="Havlak P.H."/>
            <person name="Chen R."/>
            <person name="Durbin K.J."/>
            <person name="Egan A."/>
            <person name="Ren Y."/>
            <person name="Song X.-Z."/>
            <person name="Li B."/>
            <person name="Liu Y."/>
            <person name="Qin X."/>
            <person name="Cawley S."/>
            <person name="Cooney A.J."/>
            <person name="D'Souza L.M."/>
            <person name="Martin K."/>
            <person name="Wu J.Q."/>
            <person name="Gonzalez-Garay M.L."/>
            <person name="Jackson A.R."/>
            <person name="Kalafus K.J."/>
            <person name="McLeod M.P."/>
            <person name="Milosavljevic A."/>
            <person name="Virk D."/>
            <person name="Volkov A."/>
            <person name="Wheeler D.A."/>
            <person name="Zhang Z."/>
            <person name="Bailey J.A."/>
            <person name="Eichler E.E."/>
            <person name="Tuzun E."/>
            <person name="Birney E."/>
            <person name="Mongin E."/>
            <person name="Ureta-Vidal A."/>
            <person name="Woodwark C."/>
            <person name="Zdobnov E."/>
            <person name="Bork P."/>
            <person name="Suyama M."/>
            <person name="Torrents D."/>
            <person name="Alexandersson M."/>
            <person name="Trask B.J."/>
            <person name="Young J.M."/>
            <person name="Huang H."/>
            <person name="Wang H."/>
            <person name="Xing H."/>
            <person name="Daniels S."/>
            <person name="Gietzen D."/>
            <person name="Schmidt J."/>
            <person name="Stevens K."/>
            <person name="Vitt U."/>
            <person name="Wingrove J."/>
            <person name="Camara F."/>
            <person name="Mar Alba M."/>
            <person name="Abril J.F."/>
            <person name="Guigo R."/>
            <person name="Smit A."/>
            <person name="Dubchak I."/>
            <person name="Rubin E.M."/>
            <person name="Couronne O."/>
            <person name="Poliakov A."/>
            <person name="Huebner N."/>
            <person name="Ganten D."/>
            <person name="Goesele C."/>
            <person name="Hummel O."/>
            <person name="Kreitler T."/>
            <person name="Lee Y.-A."/>
            <person name="Monti J."/>
            <person name="Schulz H."/>
            <person name="Zimdahl H."/>
            <person name="Himmelbauer H."/>
            <person name="Lehrach H."/>
            <person name="Jacob H.J."/>
            <person name="Bromberg S."/>
            <person name="Gullings-Handley J."/>
            <person name="Jensen-Seaman M.I."/>
            <person name="Kwitek A.E."/>
            <person name="Lazar J."/>
            <person name="Pasko D."/>
            <person name="Tonellato P.J."/>
            <person name="Twigger S."/>
            <person name="Ponting C.P."/>
            <person name="Duarte J.M."/>
            <person name="Rice S."/>
            <person name="Goodstadt L."/>
            <person name="Beatson S.A."/>
            <person name="Emes R.D."/>
            <person name="Winter E.E."/>
            <person name="Webber C."/>
            <person name="Brandt P."/>
            <person name="Nyakatura G."/>
            <person name="Adetobi M."/>
            <person name="Chiaromonte F."/>
            <person name="Elnitski L."/>
            <person name="Eswara P."/>
            <person name="Hardison R.C."/>
            <person name="Hou M."/>
            <person name="Kolbe D."/>
            <person name="Makova K."/>
            <person name="Miller W."/>
            <person name="Nekrutenko A."/>
            <person name="Riemer C."/>
            <person name="Schwartz S."/>
            <person name="Taylor J."/>
            <person name="Yang S."/>
            <person name="Zhang Y."/>
            <person name="Lindpaintner K."/>
            <person name="Andrews T.D."/>
            <person name="Caccamo M."/>
            <person name="Clamp M."/>
            <person name="Clarke L."/>
            <person name="Curwen V."/>
            <person name="Durbin R.M."/>
            <person name="Eyras E."/>
            <person name="Searle S.M."/>
            <person name="Cooper G.M."/>
            <person name="Batzoglou S."/>
            <person name="Brudno M."/>
            <person name="Sidow A."/>
            <person name="Stone E.A."/>
            <person name="Payseur B.A."/>
            <person name="Bourque G."/>
            <person name="Lopez-Otin C."/>
            <person name="Puente X.S."/>
            <person name="Chakrabarti K."/>
            <person name="Chatterji S."/>
            <person name="Dewey C."/>
            <person name="Pachter L."/>
            <person name="Bray N."/>
            <person name="Yap V.B."/>
            <person name="Caspi A."/>
            <person name="Tesler G."/>
            <person name="Pevzner P.A."/>
            <person name="Haussler D."/>
            <person name="Roskin K.M."/>
            <person name="Baertsch R."/>
            <person name="Clawson H."/>
            <person name="Furey T.S."/>
            <person name="Hinrichs A.S."/>
            <person name="Karolchik D."/>
            <person name="Kent W.J."/>
            <person name="Rosenbloom K.R."/>
            <person name="Trumbower H."/>
            <person name="Weirauch M."/>
            <person name="Cooper D.N."/>
            <person name="Stenson P.D."/>
            <person name="Ma B."/>
            <person name="Brent M."/>
            <person name="Arumugam M."/>
            <person name="Shteynberg D."/>
            <person name="Copley R.R."/>
            <person name="Taylor M.S."/>
            <person name="Riethman H."/>
            <person name="Mudunuri U."/>
            <person name="Peterson J."/>
            <person name="Guyer M."/>
            <person name="Felsenfeld A."/>
            <person name="Old S."/>
            <person name="Mockrin S."/>
            <person name="Collins F.S."/>
        </authorList>
    </citation>
    <scope>NUCLEOTIDE SEQUENCE [LARGE SCALE GENOMIC DNA]</scope>
    <source>
        <strain>Brown Norway</strain>
    </source>
</reference>
<protein>
    <recommendedName>
        <fullName evidence="1">Ubiquinol-cytochrome-c reductase complex assembly factor 3</fullName>
    </recommendedName>
</protein>
<evidence type="ECO:0000250" key="1">
    <source>
        <dbReference type="UniProtKB" id="Q6UW78"/>
    </source>
</evidence>
<evidence type="ECO:0000250" key="2">
    <source>
        <dbReference type="UniProtKB" id="Q8K2T4"/>
    </source>
</evidence>
<evidence type="ECO:0000255" key="3"/>
<evidence type="ECO:0000305" key="4"/>
<keyword id="KW-0066">ATP synthesis</keyword>
<keyword id="KW-0472">Membrane</keyword>
<keyword id="KW-0496">Mitochondrion</keyword>
<keyword id="KW-0999">Mitochondrion inner membrane</keyword>
<keyword id="KW-1185">Reference proteome</keyword>
<keyword id="KW-0812">Transmembrane</keyword>
<keyword id="KW-1133">Transmembrane helix</keyword>
<sequence>MEAARKALAVVAVLGAGGGVGSILFALVTPGELQKQLMLQEMPERDSRRRDEAVRTKELVMATLKDAAATKENVAWRRNWTVRGDGRSA</sequence>
<comment type="function">
    <text evidence="1">Required for the assembly of the ubiquinol-cytochrome c reductase complex (mitochondrial respiratory chain complex III or cytochrome b-c1 complex), mediating cytochrome b recruitment and probably stabilization within the complex. Thereby, plays an important role in ATP production by mitochondria. Cardiolipin-binding protein, it may also control the cardiolipin composition of mitochondria membranes and their morphology.</text>
</comment>
<comment type="subunit">
    <text evidence="1 2">Associates with the ubiquinol-cytochrome c reductase complex (mitochondrial respiratory chain complex III(CIII) or cytochrome b-c1 complex) (By similarity). Interacts with UQCC1 (By similarity). Forms a complex, named COMC, composed of UQCC1, UQCC2; UQCC3 and UQCC4; mediates MT-CYB hemylation and association with the first nuclear-encoded complex III subunit UQCRQ (By similarity).</text>
</comment>
<comment type="subcellular location">
    <subcellularLocation>
        <location evidence="1">Mitochondrion inner membrane</location>
        <topology evidence="3">Single-pass membrane protein</topology>
    </subcellularLocation>
</comment>
<comment type="PTM">
    <text evidence="1">Probably cleaved by OMA1 under mitochondrial stress conditions.</text>
</comment>
<comment type="similarity">
    <text evidence="4">Belongs to the UQCC3 family.</text>
</comment>
<dbReference type="EMBL" id="FM057246">
    <property type="status" value="NOT_ANNOTATED_CDS"/>
    <property type="molecule type" value="mRNA"/>
</dbReference>
<dbReference type="RefSeq" id="NP_001162132.1">
    <property type="nucleotide sequence ID" value="NM_001168661.1"/>
</dbReference>
<dbReference type="SMR" id="P0CD94"/>
<dbReference type="FunCoup" id="P0CD94">
    <property type="interactions" value="186"/>
</dbReference>
<dbReference type="IntAct" id="P0CD94">
    <property type="interactions" value="1"/>
</dbReference>
<dbReference type="STRING" id="10116.ENSRNOP00000064397"/>
<dbReference type="GlyGen" id="P0CD94">
    <property type="glycosylation" value="1 site"/>
</dbReference>
<dbReference type="PhosphoSitePlus" id="P0CD94"/>
<dbReference type="PaxDb" id="10116-ENSRNOP00000064397"/>
<dbReference type="Ensembl" id="ENSRNOT00000074747.2">
    <property type="protein sequence ID" value="ENSRNOP00000064397.1"/>
    <property type="gene ID" value="ENSRNOG00000045561.2"/>
</dbReference>
<dbReference type="GeneID" id="690344"/>
<dbReference type="KEGG" id="rno:690344"/>
<dbReference type="UCSC" id="RGD:1597344">
    <property type="organism name" value="rat"/>
</dbReference>
<dbReference type="AGR" id="RGD:1597344"/>
<dbReference type="CTD" id="790955"/>
<dbReference type="RGD" id="1597344">
    <property type="gene designation" value="Uqcc3"/>
</dbReference>
<dbReference type="eggNOG" id="ENOG502S9VI">
    <property type="taxonomic scope" value="Eukaryota"/>
</dbReference>
<dbReference type="GeneTree" id="ENSGT00390000001930"/>
<dbReference type="HOGENOM" id="CLU_184624_0_0_1"/>
<dbReference type="InParanoid" id="P0CD94"/>
<dbReference type="OMA" id="THENVAW"/>
<dbReference type="OrthoDB" id="9884264at2759"/>
<dbReference type="PhylomeDB" id="P0CD94"/>
<dbReference type="PRO" id="PR:P0CD94"/>
<dbReference type="Proteomes" id="UP000002494">
    <property type="component" value="Chromosome 1"/>
</dbReference>
<dbReference type="Bgee" id="ENSRNOG00000045561">
    <property type="expression patterns" value="Expressed in ovary and 20 other cell types or tissues"/>
</dbReference>
<dbReference type="GO" id="GO:0005743">
    <property type="term" value="C:mitochondrial inner membrane"/>
    <property type="evidence" value="ECO:0000250"/>
    <property type="project" value="UniProtKB"/>
</dbReference>
<dbReference type="GO" id="GO:1901612">
    <property type="term" value="F:cardiolipin binding"/>
    <property type="evidence" value="ECO:0000250"/>
    <property type="project" value="UniProtKB"/>
</dbReference>
<dbReference type="GO" id="GO:0070300">
    <property type="term" value="F:phosphatidic acid binding"/>
    <property type="evidence" value="ECO:0000250"/>
    <property type="project" value="UniProtKB"/>
</dbReference>
<dbReference type="GO" id="GO:0006754">
    <property type="term" value="P:ATP biosynthetic process"/>
    <property type="evidence" value="ECO:0007669"/>
    <property type="project" value="UniProtKB-KW"/>
</dbReference>
<dbReference type="GO" id="GO:0042407">
    <property type="term" value="P:cristae formation"/>
    <property type="evidence" value="ECO:0000250"/>
    <property type="project" value="UniProtKB"/>
</dbReference>
<dbReference type="GO" id="GO:0006122">
    <property type="term" value="P:mitochondrial electron transport, ubiquinol to cytochrome c"/>
    <property type="evidence" value="ECO:0000250"/>
    <property type="project" value="UniProtKB"/>
</dbReference>
<dbReference type="GO" id="GO:0034551">
    <property type="term" value="P:mitochondrial respiratory chain complex III assembly"/>
    <property type="evidence" value="ECO:0000250"/>
    <property type="project" value="UniProtKB"/>
</dbReference>
<dbReference type="InterPro" id="IPR027896">
    <property type="entry name" value="UQCC3"/>
</dbReference>
<dbReference type="PANTHER" id="PTHR36465">
    <property type="entry name" value="UBIQUINOL-CYTOCHROME-C REDUCTASE COMPLEX ASSEMBLY FACTOR 3"/>
    <property type="match status" value="1"/>
</dbReference>
<dbReference type="PANTHER" id="PTHR36465:SF1">
    <property type="entry name" value="UBIQUINOL-CYTOCHROME-C REDUCTASE COMPLEX ASSEMBLY FACTOR 3"/>
    <property type="match status" value="1"/>
</dbReference>
<dbReference type="Pfam" id="PF15141">
    <property type="entry name" value="UQCC3"/>
    <property type="match status" value="1"/>
</dbReference>
<accession>P0CD94</accession>